<feature type="chain" id="PRO_1000003873" description="Nucleoid-associated protein YPDSF_2758">
    <location>
        <begin position="1"/>
        <end position="110"/>
    </location>
</feature>
<feature type="region of interest" description="Disordered" evidence="2">
    <location>
        <begin position="90"/>
        <end position="110"/>
    </location>
</feature>
<keyword id="KW-0963">Cytoplasm</keyword>
<keyword id="KW-0238">DNA-binding</keyword>
<comment type="function">
    <text evidence="1">Binds to DNA and alters its conformation. May be involved in regulation of gene expression, nucleoid organization and DNA protection.</text>
</comment>
<comment type="subunit">
    <text evidence="1">Homodimer.</text>
</comment>
<comment type="subcellular location">
    <subcellularLocation>
        <location evidence="1">Cytoplasm</location>
        <location evidence="1">Nucleoid</location>
    </subcellularLocation>
</comment>
<comment type="similarity">
    <text evidence="1">Belongs to the YbaB/EbfC family.</text>
</comment>
<evidence type="ECO:0000255" key="1">
    <source>
        <dbReference type="HAMAP-Rule" id="MF_00274"/>
    </source>
</evidence>
<evidence type="ECO:0000256" key="2">
    <source>
        <dbReference type="SAM" id="MobiDB-lite"/>
    </source>
</evidence>
<gene>
    <name type="ordered locus">YPDSF_2758</name>
</gene>
<organism>
    <name type="scientific">Yersinia pestis (strain Pestoides F)</name>
    <dbReference type="NCBI Taxonomy" id="386656"/>
    <lineage>
        <taxon>Bacteria</taxon>
        <taxon>Pseudomonadati</taxon>
        <taxon>Pseudomonadota</taxon>
        <taxon>Gammaproteobacteria</taxon>
        <taxon>Enterobacterales</taxon>
        <taxon>Yersiniaceae</taxon>
        <taxon>Yersinia</taxon>
    </lineage>
</organism>
<dbReference type="EMBL" id="CP000668">
    <property type="protein sequence ID" value="ABP41120.1"/>
    <property type="molecule type" value="Genomic_DNA"/>
</dbReference>
<dbReference type="RefSeq" id="WP_002208604.1">
    <property type="nucleotide sequence ID" value="NZ_CP009715.1"/>
</dbReference>
<dbReference type="SMR" id="A4TPA8"/>
<dbReference type="KEGG" id="ypp:YPDSF_2758"/>
<dbReference type="PATRIC" id="fig|386656.14.peg.15"/>
<dbReference type="GO" id="GO:0043590">
    <property type="term" value="C:bacterial nucleoid"/>
    <property type="evidence" value="ECO:0007669"/>
    <property type="project" value="UniProtKB-UniRule"/>
</dbReference>
<dbReference type="GO" id="GO:0005829">
    <property type="term" value="C:cytosol"/>
    <property type="evidence" value="ECO:0007669"/>
    <property type="project" value="TreeGrafter"/>
</dbReference>
<dbReference type="GO" id="GO:0003677">
    <property type="term" value="F:DNA binding"/>
    <property type="evidence" value="ECO:0007669"/>
    <property type="project" value="UniProtKB-UniRule"/>
</dbReference>
<dbReference type="FunFam" id="3.30.1310.10:FF:000001">
    <property type="entry name" value="Nucleoid-associated protein YbaB"/>
    <property type="match status" value="1"/>
</dbReference>
<dbReference type="Gene3D" id="3.30.1310.10">
    <property type="entry name" value="Nucleoid-associated protein YbaB-like domain"/>
    <property type="match status" value="1"/>
</dbReference>
<dbReference type="HAMAP" id="MF_00274">
    <property type="entry name" value="DNA_YbaB_EbfC"/>
    <property type="match status" value="1"/>
</dbReference>
<dbReference type="InterPro" id="IPR036894">
    <property type="entry name" value="YbaB-like_sf"/>
</dbReference>
<dbReference type="InterPro" id="IPR004401">
    <property type="entry name" value="YbaB/EbfC"/>
</dbReference>
<dbReference type="NCBIfam" id="TIGR00103">
    <property type="entry name" value="DNA_YbaB_EbfC"/>
    <property type="match status" value="1"/>
</dbReference>
<dbReference type="PANTHER" id="PTHR33449">
    <property type="entry name" value="NUCLEOID-ASSOCIATED PROTEIN YBAB"/>
    <property type="match status" value="1"/>
</dbReference>
<dbReference type="PANTHER" id="PTHR33449:SF1">
    <property type="entry name" value="NUCLEOID-ASSOCIATED PROTEIN YBAB"/>
    <property type="match status" value="1"/>
</dbReference>
<dbReference type="Pfam" id="PF02575">
    <property type="entry name" value="YbaB_DNA_bd"/>
    <property type="match status" value="1"/>
</dbReference>
<dbReference type="PIRSF" id="PIRSF004555">
    <property type="entry name" value="UCP004555"/>
    <property type="match status" value="1"/>
</dbReference>
<dbReference type="SUPFAM" id="SSF82607">
    <property type="entry name" value="YbaB-like"/>
    <property type="match status" value="1"/>
</dbReference>
<sequence length="110" mass="12093">MFGKGGIGNLMKQAQQMQEKMQQMQEEVAKLEVTGESGAGLVKVTINGAHNCRRVEIDPSLLVEDDKEMLEDLIAAALNDAARRIDETQKEKMASVSNGMQLPPGFKMPF</sequence>
<reference key="1">
    <citation type="submission" date="2007-02" db="EMBL/GenBank/DDBJ databases">
        <title>Complete sequence of chromosome of Yersinia pestis Pestoides F.</title>
        <authorList>
            <consortium name="US DOE Joint Genome Institute"/>
            <person name="Copeland A."/>
            <person name="Lucas S."/>
            <person name="Lapidus A."/>
            <person name="Barry K."/>
            <person name="Detter J.C."/>
            <person name="Glavina del Rio T."/>
            <person name="Hammon N."/>
            <person name="Israni S."/>
            <person name="Dalin E."/>
            <person name="Tice H."/>
            <person name="Pitluck S."/>
            <person name="Di Bartolo G."/>
            <person name="Chain P."/>
            <person name="Malfatti S."/>
            <person name="Shin M."/>
            <person name="Vergez L."/>
            <person name="Schmutz J."/>
            <person name="Larimer F."/>
            <person name="Land M."/>
            <person name="Hauser L."/>
            <person name="Worsham P."/>
            <person name="Chu M."/>
            <person name="Bearden S."/>
            <person name="Garcia E."/>
            <person name="Richardson P."/>
        </authorList>
    </citation>
    <scope>NUCLEOTIDE SEQUENCE [LARGE SCALE GENOMIC DNA]</scope>
    <source>
        <strain>Pestoides F</strain>
    </source>
</reference>
<proteinExistence type="inferred from homology"/>
<name>Y2758_YERPP</name>
<accession>A4TPA8</accession>
<protein>
    <recommendedName>
        <fullName evidence="1">Nucleoid-associated protein YPDSF_2758</fullName>
    </recommendedName>
</protein>